<reference key="1">
    <citation type="journal article" date="2010" name="Genome Biol.">
        <title>Structure and dynamics of the pan-genome of Streptococcus pneumoniae and closely related species.</title>
        <authorList>
            <person name="Donati C."/>
            <person name="Hiller N.L."/>
            <person name="Tettelin H."/>
            <person name="Muzzi A."/>
            <person name="Croucher N.J."/>
            <person name="Angiuoli S.V."/>
            <person name="Oggioni M."/>
            <person name="Dunning Hotopp J.C."/>
            <person name="Hu F.Z."/>
            <person name="Riley D.R."/>
            <person name="Covacci A."/>
            <person name="Mitchell T.J."/>
            <person name="Bentley S.D."/>
            <person name="Kilian M."/>
            <person name="Ehrlich G.D."/>
            <person name="Rappuoli R."/>
            <person name="Moxon E.R."/>
            <person name="Masignani V."/>
        </authorList>
    </citation>
    <scope>NUCLEOTIDE SEQUENCE [LARGE SCALE GENOMIC DNA]</scope>
    <source>
        <strain>Taiwan19F-14</strain>
    </source>
</reference>
<gene>
    <name evidence="2" type="primary">arcB</name>
    <name type="ordered locus">SPT_2161</name>
</gene>
<sequence>MTNSVFQGRSFLAEKDFTRAELEYLIGLSAHLKDLKKRNIQHHYLAGKNIALLFEKTSTRTRAAFTTAAIDLGAHPEYLGANDIQLGKKESTEDTAKVLGRMFDGIEFRGFSQRMVEELAEFSGVPVWNGLTDEWHPTQMLADYLTVQENFGRLEGLTLVYCGDGRNNVANSLLVTGAILGVNVHIFSPKELFPEKEIVELAEGFAKESGAHVLITEDADEAVKDADVLYTDVWVSMGEEDKFAERVALLKPYQVNMDLVKKAGNENLIFLHCLPAFHDTHTVYGKDVAEKFGVEEMEVTDEVFRSKYARHFDQAENRMHTIKAVMAATLGNLYIPKV</sequence>
<name>OTC_STRZT</name>
<keyword id="KW-0056">Arginine metabolism</keyword>
<keyword id="KW-0963">Cytoplasm</keyword>
<keyword id="KW-0808">Transferase</keyword>
<dbReference type="EC" id="2.1.3.3" evidence="2"/>
<dbReference type="EMBL" id="CP000921">
    <property type="protein sequence ID" value="ACO23517.1"/>
    <property type="molecule type" value="Genomic_DNA"/>
</dbReference>
<dbReference type="SMR" id="C1CU67"/>
<dbReference type="KEGG" id="snt:SPT_2161"/>
<dbReference type="HOGENOM" id="CLU_043846_3_1_9"/>
<dbReference type="UniPathway" id="UPA00254">
    <property type="reaction ID" value="UER00365"/>
</dbReference>
<dbReference type="GO" id="GO:0005737">
    <property type="term" value="C:cytoplasm"/>
    <property type="evidence" value="ECO:0007669"/>
    <property type="project" value="UniProtKB-SubCell"/>
</dbReference>
<dbReference type="GO" id="GO:0016597">
    <property type="term" value="F:amino acid binding"/>
    <property type="evidence" value="ECO:0007669"/>
    <property type="project" value="InterPro"/>
</dbReference>
<dbReference type="GO" id="GO:0004585">
    <property type="term" value="F:ornithine carbamoyltransferase activity"/>
    <property type="evidence" value="ECO:0007669"/>
    <property type="project" value="UniProtKB-UniRule"/>
</dbReference>
<dbReference type="GO" id="GO:0042450">
    <property type="term" value="P:arginine biosynthetic process via ornithine"/>
    <property type="evidence" value="ECO:0007669"/>
    <property type="project" value="TreeGrafter"/>
</dbReference>
<dbReference type="GO" id="GO:0019547">
    <property type="term" value="P:arginine catabolic process to ornithine"/>
    <property type="evidence" value="ECO:0007669"/>
    <property type="project" value="UniProtKB-UniRule"/>
</dbReference>
<dbReference type="GO" id="GO:0019240">
    <property type="term" value="P:citrulline biosynthetic process"/>
    <property type="evidence" value="ECO:0007669"/>
    <property type="project" value="TreeGrafter"/>
</dbReference>
<dbReference type="FunFam" id="3.40.50.1370:FF:000004">
    <property type="entry name" value="Ornithine carbamoyltransferase"/>
    <property type="match status" value="1"/>
</dbReference>
<dbReference type="Gene3D" id="3.40.50.1370">
    <property type="entry name" value="Aspartate/ornithine carbamoyltransferase"/>
    <property type="match status" value="2"/>
</dbReference>
<dbReference type="HAMAP" id="MF_01109">
    <property type="entry name" value="OTCase"/>
    <property type="match status" value="1"/>
</dbReference>
<dbReference type="InterPro" id="IPR006132">
    <property type="entry name" value="Asp/Orn_carbamoyltranf_P-bd"/>
</dbReference>
<dbReference type="InterPro" id="IPR006130">
    <property type="entry name" value="Asp/Orn_carbamoylTrfase"/>
</dbReference>
<dbReference type="InterPro" id="IPR036901">
    <property type="entry name" value="Asp/Orn_carbamoylTrfase_sf"/>
</dbReference>
<dbReference type="InterPro" id="IPR006131">
    <property type="entry name" value="Asp_carbamoyltransf_Asp/Orn-bd"/>
</dbReference>
<dbReference type="InterPro" id="IPR002292">
    <property type="entry name" value="Orn/put_carbamltrans"/>
</dbReference>
<dbReference type="InterPro" id="IPR024904">
    <property type="entry name" value="OTCase_ArgI"/>
</dbReference>
<dbReference type="NCBIfam" id="TIGR00658">
    <property type="entry name" value="orni_carb_tr"/>
    <property type="match status" value="1"/>
</dbReference>
<dbReference type="NCBIfam" id="NF001986">
    <property type="entry name" value="PRK00779.1"/>
    <property type="match status" value="1"/>
</dbReference>
<dbReference type="PANTHER" id="PTHR45753:SF1">
    <property type="entry name" value="ORNITHINE CARBAMOYLTRANSFERASE, CATABOLIC"/>
    <property type="match status" value="1"/>
</dbReference>
<dbReference type="PANTHER" id="PTHR45753">
    <property type="entry name" value="ORNITHINE CARBAMOYLTRANSFERASE, MITOCHONDRIAL"/>
    <property type="match status" value="1"/>
</dbReference>
<dbReference type="Pfam" id="PF00185">
    <property type="entry name" value="OTCace"/>
    <property type="match status" value="1"/>
</dbReference>
<dbReference type="Pfam" id="PF02729">
    <property type="entry name" value="OTCace_N"/>
    <property type="match status" value="1"/>
</dbReference>
<dbReference type="PRINTS" id="PR00100">
    <property type="entry name" value="AOTCASE"/>
</dbReference>
<dbReference type="PRINTS" id="PR00102">
    <property type="entry name" value="OTCASE"/>
</dbReference>
<dbReference type="SUPFAM" id="SSF53671">
    <property type="entry name" value="Aspartate/ornithine carbamoyltransferase"/>
    <property type="match status" value="1"/>
</dbReference>
<dbReference type="PROSITE" id="PS00097">
    <property type="entry name" value="CARBAMOYLTRANSFERASE"/>
    <property type="match status" value="1"/>
</dbReference>
<proteinExistence type="inferred from homology"/>
<feature type="chain" id="PRO_1000163989" description="Ornithine carbamoyltransferase">
    <location>
        <begin position="1"/>
        <end position="338"/>
    </location>
</feature>
<feature type="binding site" evidence="2">
    <location>
        <begin position="58"/>
        <end position="61"/>
    </location>
    <ligand>
        <name>carbamoyl phosphate</name>
        <dbReference type="ChEBI" id="CHEBI:58228"/>
    </ligand>
</feature>
<feature type="binding site" evidence="2">
    <location>
        <position position="85"/>
    </location>
    <ligand>
        <name>carbamoyl phosphate</name>
        <dbReference type="ChEBI" id="CHEBI:58228"/>
    </ligand>
</feature>
<feature type="binding site" evidence="2">
    <location>
        <position position="109"/>
    </location>
    <ligand>
        <name>carbamoyl phosphate</name>
        <dbReference type="ChEBI" id="CHEBI:58228"/>
    </ligand>
</feature>
<feature type="binding site" evidence="2">
    <location>
        <begin position="136"/>
        <end position="139"/>
    </location>
    <ligand>
        <name>carbamoyl phosphate</name>
        <dbReference type="ChEBI" id="CHEBI:58228"/>
    </ligand>
</feature>
<feature type="binding site" evidence="2">
    <location>
        <position position="168"/>
    </location>
    <ligand>
        <name>L-ornithine</name>
        <dbReference type="ChEBI" id="CHEBI:46911"/>
    </ligand>
</feature>
<feature type="binding site" evidence="2">
    <location>
        <position position="232"/>
    </location>
    <ligand>
        <name>L-ornithine</name>
        <dbReference type="ChEBI" id="CHEBI:46911"/>
    </ligand>
</feature>
<feature type="binding site" evidence="2">
    <location>
        <begin position="236"/>
        <end position="237"/>
    </location>
    <ligand>
        <name>L-ornithine</name>
        <dbReference type="ChEBI" id="CHEBI:46911"/>
    </ligand>
</feature>
<feature type="binding site" evidence="2">
    <location>
        <begin position="273"/>
        <end position="274"/>
    </location>
    <ligand>
        <name>carbamoyl phosphate</name>
        <dbReference type="ChEBI" id="CHEBI:58228"/>
    </ligand>
</feature>
<feature type="binding site" evidence="2">
    <location>
        <position position="318"/>
    </location>
    <ligand>
        <name>carbamoyl phosphate</name>
        <dbReference type="ChEBI" id="CHEBI:58228"/>
    </ligand>
</feature>
<comment type="function">
    <text evidence="1">Reversibly catalyzes the transfer of the carbamoyl group from carbamoyl phosphate (CP) to the N(epsilon) atom of ornithine (ORN) to produce L-citrulline.</text>
</comment>
<comment type="catalytic activity">
    <reaction evidence="2">
        <text>carbamoyl phosphate + L-ornithine = L-citrulline + phosphate + H(+)</text>
        <dbReference type="Rhea" id="RHEA:19513"/>
        <dbReference type="ChEBI" id="CHEBI:15378"/>
        <dbReference type="ChEBI" id="CHEBI:43474"/>
        <dbReference type="ChEBI" id="CHEBI:46911"/>
        <dbReference type="ChEBI" id="CHEBI:57743"/>
        <dbReference type="ChEBI" id="CHEBI:58228"/>
        <dbReference type="EC" id="2.1.3.3"/>
    </reaction>
</comment>
<comment type="pathway">
    <text evidence="2">Amino-acid degradation; L-arginine degradation via ADI pathway; carbamoyl phosphate from L-arginine: step 2/2.</text>
</comment>
<comment type="subcellular location">
    <subcellularLocation>
        <location evidence="2">Cytoplasm</location>
    </subcellularLocation>
</comment>
<comment type="similarity">
    <text evidence="2">Belongs to the aspartate/ornithine carbamoyltransferase superfamily. OTCase family.</text>
</comment>
<evidence type="ECO:0000250" key="1"/>
<evidence type="ECO:0000255" key="2">
    <source>
        <dbReference type="HAMAP-Rule" id="MF_01109"/>
    </source>
</evidence>
<accession>C1CU67</accession>
<protein>
    <recommendedName>
        <fullName evidence="2">Ornithine carbamoyltransferase</fullName>
        <shortName evidence="2">OTCase</shortName>
        <ecNumber evidence="2">2.1.3.3</ecNumber>
    </recommendedName>
</protein>
<organism>
    <name type="scientific">Streptococcus pneumoniae (strain Taiwan19F-14)</name>
    <dbReference type="NCBI Taxonomy" id="487213"/>
    <lineage>
        <taxon>Bacteria</taxon>
        <taxon>Bacillati</taxon>
        <taxon>Bacillota</taxon>
        <taxon>Bacilli</taxon>
        <taxon>Lactobacillales</taxon>
        <taxon>Streptococcaceae</taxon>
        <taxon>Streptococcus</taxon>
    </lineage>
</organism>